<sequence>MTQPIRDSLGRPLRDLRISVTDRCNMRCRYCMPREIFGPNFTFLPRSELLTFEEITRIAAAFIRAGVRKIRLTGGEPLLRADLPRLVAMLADLPDVHDLALTTNGSLLARYARPLRDAGLRRVTVSLDTLNPATFSRLADTDIPLDNVLAGIDAAQSAGFFPIKLNAVIRRGVNDGDVEELAAFARDNGHIMRFIEYMDVGNSNGWRAADVVPAAEIIARISSHWPIDPLPPRYPGEVANRFRYRDGRGEFGVIASITQPFCRDCTRLRLSAVGEVFTCLFAVRGHDLRSIVRSNTDSAAIDAALDEAITRIWSRRSDRYSELRALDSDGSREDADESEASAVPGRSTHPGHRKVEMSYIGG</sequence>
<name>MOAA_ACIC1</name>
<accession>A0LVG0</accession>
<dbReference type="EC" id="4.1.99.22" evidence="1"/>
<dbReference type="EMBL" id="CP000481">
    <property type="protein sequence ID" value="ABK53420.1"/>
    <property type="molecule type" value="Genomic_DNA"/>
</dbReference>
<dbReference type="RefSeq" id="WP_011720483.1">
    <property type="nucleotide sequence ID" value="NC_008578.1"/>
</dbReference>
<dbReference type="SMR" id="A0LVG0"/>
<dbReference type="FunCoup" id="A0LVG0">
    <property type="interactions" value="213"/>
</dbReference>
<dbReference type="STRING" id="351607.Acel_1648"/>
<dbReference type="KEGG" id="ace:Acel_1648"/>
<dbReference type="eggNOG" id="COG2896">
    <property type="taxonomic scope" value="Bacteria"/>
</dbReference>
<dbReference type="HOGENOM" id="CLU_009273_0_1_11"/>
<dbReference type="InParanoid" id="A0LVG0"/>
<dbReference type="OrthoDB" id="9763993at2"/>
<dbReference type="UniPathway" id="UPA00344"/>
<dbReference type="Proteomes" id="UP000008221">
    <property type="component" value="Chromosome"/>
</dbReference>
<dbReference type="GO" id="GO:0051539">
    <property type="term" value="F:4 iron, 4 sulfur cluster binding"/>
    <property type="evidence" value="ECO:0007669"/>
    <property type="project" value="UniProtKB-UniRule"/>
</dbReference>
<dbReference type="GO" id="GO:0061799">
    <property type="term" value="F:cyclic pyranopterin monophosphate synthase activity"/>
    <property type="evidence" value="ECO:0007669"/>
    <property type="project" value="TreeGrafter"/>
</dbReference>
<dbReference type="GO" id="GO:0061798">
    <property type="term" value="F:GTP 3',8'-cyclase activity"/>
    <property type="evidence" value="ECO:0007669"/>
    <property type="project" value="UniProtKB-UniRule"/>
</dbReference>
<dbReference type="GO" id="GO:0005525">
    <property type="term" value="F:GTP binding"/>
    <property type="evidence" value="ECO:0007669"/>
    <property type="project" value="UniProtKB-UniRule"/>
</dbReference>
<dbReference type="GO" id="GO:0046872">
    <property type="term" value="F:metal ion binding"/>
    <property type="evidence" value="ECO:0007669"/>
    <property type="project" value="UniProtKB-KW"/>
</dbReference>
<dbReference type="GO" id="GO:1904047">
    <property type="term" value="F:S-adenosyl-L-methionine binding"/>
    <property type="evidence" value="ECO:0007669"/>
    <property type="project" value="UniProtKB-UniRule"/>
</dbReference>
<dbReference type="GO" id="GO:0006777">
    <property type="term" value="P:Mo-molybdopterin cofactor biosynthetic process"/>
    <property type="evidence" value="ECO:0007669"/>
    <property type="project" value="UniProtKB-UniRule"/>
</dbReference>
<dbReference type="CDD" id="cd01335">
    <property type="entry name" value="Radical_SAM"/>
    <property type="match status" value="1"/>
</dbReference>
<dbReference type="CDD" id="cd21117">
    <property type="entry name" value="Twitch_MoaA"/>
    <property type="match status" value="1"/>
</dbReference>
<dbReference type="Gene3D" id="3.20.20.70">
    <property type="entry name" value="Aldolase class I"/>
    <property type="match status" value="1"/>
</dbReference>
<dbReference type="HAMAP" id="MF_01225_B">
    <property type="entry name" value="MoaA_B"/>
    <property type="match status" value="1"/>
</dbReference>
<dbReference type="InterPro" id="IPR013785">
    <property type="entry name" value="Aldolase_TIM"/>
</dbReference>
<dbReference type="InterPro" id="IPR006638">
    <property type="entry name" value="Elp3/MiaA/NifB-like_rSAM"/>
</dbReference>
<dbReference type="InterPro" id="IPR013483">
    <property type="entry name" value="MoaA"/>
</dbReference>
<dbReference type="InterPro" id="IPR000385">
    <property type="entry name" value="MoaA_NifB_PqqE_Fe-S-bd_CS"/>
</dbReference>
<dbReference type="InterPro" id="IPR010505">
    <property type="entry name" value="MoaA_twitch"/>
</dbReference>
<dbReference type="InterPro" id="IPR050105">
    <property type="entry name" value="MoCo_biosynth_MoaA/MoaC"/>
</dbReference>
<dbReference type="InterPro" id="IPR007197">
    <property type="entry name" value="rSAM"/>
</dbReference>
<dbReference type="NCBIfam" id="TIGR02666">
    <property type="entry name" value="moaA"/>
    <property type="match status" value="1"/>
</dbReference>
<dbReference type="PANTHER" id="PTHR22960:SF0">
    <property type="entry name" value="MOLYBDENUM COFACTOR BIOSYNTHESIS PROTEIN 1"/>
    <property type="match status" value="1"/>
</dbReference>
<dbReference type="PANTHER" id="PTHR22960">
    <property type="entry name" value="MOLYBDOPTERIN COFACTOR SYNTHESIS PROTEIN A"/>
    <property type="match status" value="1"/>
</dbReference>
<dbReference type="Pfam" id="PF13353">
    <property type="entry name" value="Fer4_12"/>
    <property type="match status" value="1"/>
</dbReference>
<dbReference type="Pfam" id="PF06463">
    <property type="entry name" value="Mob_synth_C"/>
    <property type="match status" value="1"/>
</dbReference>
<dbReference type="Pfam" id="PF04055">
    <property type="entry name" value="Radical_SAM"/>
    <property type="match status" value="1"/>
</dbReference>
<dbReference type="SFLD" id="SFLDG01383">
    <property type="entry name" value="cyclic_pyranopterin_phosphate"/>
    <property type="match status" value="1"/>
</dbReference>
<dbReference type="SFLD" id="SFLDG01072">
    <property type="entry name" value="dehydrogenase_like"/>
    <property type="match status" value="1"/>
</dbReference>
<dbReference type="SMART" id="SM00729">
    <property type="entry name" value="Elp3"/>
    <property type="match status" value="1"/>
</dbReference>
<dbReference type="SUPFAM" id="SSF102114">
    <property type="entry name" value="Radical SAM enzymes"/>
    <property type="match status" value="1"/>
</dbReference>
<dbReference type="PROSITE" id="PS01305">
    <property type="entry name" value="MOAA_NIFB_PQQE"/>
    <property type="match status" value="1"/>
</dbReference>
<dbReference type="PROSITE" id="PS51918">
    <property type="entry name" value="RADICAL_SAM"/>
    <property type="match status" value="1"/>
</dbReference>
<protein>
    <recommendedName>
        <fullName evidence="1">GTP 3',8-cyclase</fullName>
        <ecNumber evidence="1">4.1.99.22</ecNumber>
    </recommendedName>
    <alternativeName>
        <fullName evidence="1">Molybdenum cofactor biosynthesis protein A</fullName>
    </alternativeName>
</protein>
<evidence type="ECO:0000255" key="1">
    <source>
        <dbReference type="HAMAP-Rule" id="MF_01225"/>
    </source>
</evidence>
<evidence type="ECO:0000255" key="2">
    <source>
        <dbReference type="PROSITE-ProRule" id="PRU01266"/>
    </source>
</evidence>
<evidence type="ECO:0000256" key="3">
    <source>
        <dbReference type="SAM" id="MobiDB-lite"/>
    </source>
</evidence>
<reference key="1">
    <citation type="journal article" date="2009" name="Genome Res.">
        <title>Complete genome of the cellulolytic thermophile Acidothermus cellulolyticus 11B provides insights into its ecophysiological and evolutionary adaptations.</title>
        <authorList>
            <person name="Barabote R.D."/>
            <person name="Xie G."/>
            <person name="Leu D.H."/>
            <person name="Normand P."/>
            <person name="Necsulea A."/>
            <person name="Daubin V."/>
            <person name="Medigue C."/>
            <person name="Adney W.S."/>
            <person name="Xu X.C."/>
            <person name="Lapidus A."/>
            <person name="Parales R.E."/>
            <person name="Detter C."/>
            <person name="Pujic P."/>
            <person name="Bruce D."/>
            <person name="Lavire C."/>
            <person name="Challacombe J.F."/>
            <person name="Brettin T.S."/>
            <person name="Berry A.M."/>
        </authorList>
    </citation>
    <scope>NUCLEOTIDE SEQUENCE [LARGE SCALE GENOMIC DNA]</scope>
    <source>
        <strain>ATCC 43068 / DSM 8971 / 11B</strain>
    </source>
</reference>
<keyword id="KW-0004">4Fe-4S</keyword>
<keyword id="KW-0342">GTP-binding</keyword>
<keyword id="KW-0408">Iron</keyword>
<keyword id="KW-0411">Iron-sulfur</keyword>
<keyword id="KW-0456">Lyase</keyword>
<keyword id="KW-0479">Metal-binding</keyword>
<keyword id="KW-0501">Molybdenum cofactor biosynthesis</keyword>
<keyword id="KW-0547">Nucleotide-binding</keyword>
<keyword id="KW-1185">Reference proteome</keyword>
<keyword id="KW-0949">S-adenosyl-L-methionine</keyword>
<proteinExistence type="inferred from homology"/>
<gene>
    <name evidence="1" type="primary">moaA</name>
    <name type="ordered locus">Acel_1648</name>
</gene>
<feature type="chain" id="PRO_1000054169" description="GTP 3',8-cyclase">
    <location>
        <begin position="1"/>
        <end position="362"/>
    </location>
</feature>
<feature type="domain" description="Radical SAM core" evidence="2">
    <location>
        <begin position="8"/>
        <end position="228"/>
    </location>
</feature>
<feature type="region of interest" description="Disordered" evidence="3">
    <location>
        <begin position="325"/>
        <end position="362"/>
    </location>
</feature>
<feature type="binding site" evidence="1">
    <location>
        <position position="17"/>
    </location>
    <ligand>
        <name>GTP</name>
        <dbReference type="ChEBI" id="CHEBI:37565"/>
    </ligand>
</feature>
<feature type="binding site" evidence="1">
    <location>
        <position position="24"/>
    </location>
    <ligand>
        <name>[4Fe-4S] cluster</name>
        <dbReference type="ChEBI" id="CHEBI:49883"/>
        <label>1</label>
        <note>4Fe-4S-S-AdoMet</note>
    </ligand>
</feature>
<feature type="binding site" evidence="1">
    <location>
        <position position="28"/>
    </location>
    <ligand>
        <name>[4Fe-4S] cluster</name>
        <dbReference type="ChEBI" id="CHEBI:49883"/>
        <label>1</label>
        <note>4Fe-4S-S-AdoMet</note>
    </ligand>
</feature>
<feature type="binding site" evidence="1">
    <location>
        <position position="30"/>
    </location>
    <ligand>
        <name>S-adenosyl-L-methionine</name>
        <dbReference type="ChEBI" id="CHEBI:59789"/>
    </ligand>
</feature>
<feature type="binding site" evidence="1">
    <location>
        <position position="31"/>
    </location>
    <ligand>
        <name>[4Fe-4S] cluster</name>
        <dbReference type="ChEBI" id="CHEBI:49883"/>
        <label>1</label>
        <note>4Fe-4S-S-AdoMet</note>
    </ligand>
</feature>
<feature type="binding site" evidence="1">
    <location>
        <position position="71"/>
    </location>
    <ligand>
        <name>GTP</name>
        <dbReference type="ChEBI" id="CHEBI:37565"/>
    </ligand>
</feature>
<feature type="binding site" evidence="1">
    <location>
        <position position="75"/>
    </location>
    <ligand>
        <name>S-adenosyl-L-methionine</name>
        <dbReference type="ChEBI" id="CHEBI:59789"/>
    </ligand>
</feature>
<feature type="binding site" evidence="1">
    <location>
        <position position="102"/>
    </location>
    <ligand>
        <name>GTP</name>
        <dbReference type="ChEBI" id="CHEBI:37565"/>
    </ligand>
</feature>
<feature type="binding site" evidence="1">
    <location>
        <position position="126"/>
    </location>
    <ligand>
        <name>S-adenosyl-L-methionine</name>
        <dbReference type="ChEBI" id="CHEBI:59789"/>
    </ligand>
</feature>
<feature type="binding site" evidence="1">
    <location>
        <position position="164"/>
    </location>
    <ligand>
        <name>GTP</name>
        <dbReference type="ChEBI" id="CHEBI:37565"/>
    </ligand>
</feature>
<feature type="binding site" evidence="1">
    <location>
        <position position="198"/>
    </location>
    <ligand>
        <name>S-adenosyl-L-methionine</name>
        <dbReference type="ChEBI" id="CHEBI:59789"/>
    </ligand>
</feature>
<feature type="binding site" evidence="1">
    <location>
        <position position="262"/>
    </location>
    <ligand>
        <name>[4Fe-4S] cluster</name>
        <dbReference type="ChEBI" id="CHEBI:49883"/>
        <label>2</label>
        <note>4Fe-4S-substrate</note>
    </ligand>
</feature>
<feature type="binding site" evidence="1">
    <location>
        <position position="265"/>
    </location>
    <ligand>
        <name>[4Fe-4S] cluster</name>
        <dbReference type="ChEBI" id="CHEBI:49883"/>
        <label>2</label>
        <note>4Fe-4S-substrate</note>
    </ligand>
</feature>
<feature type="binding site" evidence="1">
    <location>
        <begin position="267"/>
        <end position="269"/>
    </location>
    <ligand>
        <name>GTP</name>
        <dbReference type="ChEBI" id="CHEBI:37565"/>
    </ligand>
</feature>
<feature type="binding site" evidence="1">
    <location>
        <position position="279"/>
    </location>
    <ligand>
        <name>[4Fe-4S] cluster</name>
        <dbReference type="ChEBI" id="CHEBI:49883"/>
        <label>2</label>
        <note>4Fe-4S-substrate</note>
    </ligand>
</feature>
<comment type="function">
    <text evidence="1">Catalyzes the cyclization of GTP to (8S)-3',8-cyclo-7,8-dihydroguanosine 5'-triphosphate.</text>
</comment>
<comment type="catalytic activity">
    <reaction evidence="1">
        <text>GTP + AH2 + S-adenosyl-L-methionine = (8S)-3',8-cyclo-7,8-dihydroguanosine 5'-triphosphate + 5'-deoxyadenosine + L-methionine + A + H(+)</text>
        <dbReference type="Rhea" id="RHEA:49576"/>
        <dbReference type="ChEBI" id="CHEBI:13193"/>
        <dbReference type="ChEBI" id="CHEBI:15378"/>
        <dbReference type="ChEBI" id="CHEBI:17319"/>
        <dbReference type="ChEBI" id="CHEBI:17499"/>
        <dbReference type="ChEBI" id="CHEBI:37565"/>
        <dbReference type="ChEBI" id="CHEBI:57844"/>
        <dbReference type="ChEBI" id="CHEBI:59789"/>
        <dbReference type="ChEBI" id="CHEBI:131766"/>
        <dbReference type="EC" id="4.1.99.22"/>
    </reaction>
</comment>
<comment type="cofactor">
    <cofactor evidence="1">
        <name>[4Fe-4S] cluster</name>
        <dbReference type="ChEBI" id="CHEBI:49883"/>
    </cofactor>
    <text evidence="1">Binds 2 [4Fe-4S] clusters. Binds 1 [4Fe-4S] cluster coordinated with 3 cysteines and an exchangeable S-adenosyl-L-methionine and 1 [4Fe-4S] cluster coordinated with 3 cysteines and the GTP-derived substrate.</text>
</comment>
<comment type="pathway">
    <text evidence="1">Cofactor biosynthesis; molybdopterin biosynthesis.</text>
</comment>
<comment type="subunit">
    <text evidence="1">Monomer and homodimer.</text>
</comment>
<comment type="similarity">
    <text evidence="1">Belongs to the radical SAM superfamily. MoaA family.</text>
</comment>
<organism>
    <name type="scientific">Acidothermus cellulolyticus (strain ATCC 43068 / DSM 8971 / 11B)</name>
    <dbReference type="NCBI Taxonomy" id="351607"/>
    <lineage>
        <taxon>Bacteria</taxon>
        <taxon>Bacillati</taxon>
        <taxon>Actinomycetota</taxon>
        <taxon>Actinomycetes</taxon>
        <taxon>Acidothermales</taxon>
        <taxon>Acidothermaceae</taxon>
        <taxon>Acidothermus</taxon>
    </lineage>
</organism>